<comment type="function">
    <text evidence="1">Binds to DNA and alters its conformation. May be involved in regulation of gene expression, nucleoid organization and DNA protection.</text>
</comment>
<comment type="subunit">
    <text evidence="1">Homodimer.</text>
</comment>
<comment type="subcellular location">
    <subcellularLocation>
        <location evidence="1">Cytoplasm</location>
        <location evidence="1">Nucleoid</location>
    </subcellularLocation>
</comment>
<comment type="similarity">
    <text evidence="1">Belongs to the YbaB/EbfC family.</text>
</comment>
<dbReference type="EMBL" id="AP010918">
    <property type="protein sequence ID" value="BAH28049.1"/>
    <property type="molecule type" value="Genomic_DNA"/>
</dbReference>
<dbReference type="RefSeq" id="WP_003420408.1">
    <property type="nucleotide sequence ID" value="NZ_CP014566.1"/>
</dbReference>
<dbReference type="SMR" id="C1AIH0"/>
<dbReference type="KEGG" id="mbt:JTY_3778"/>
<dbReference type="HOGENOM" id="CLU_140930_4_0_11"/>
<dbReference type="GO" id="GO:0043590">
    <property type="term" value="C:bacterial nucleoid"/>
    <property type="evidence" value="ECO:0007669"/>
    <property type="project" value="UniProtKB-UniRule"/>
</dbReference>
<dbReference type="GO" id="GO:0005829">
    <property type="term" value="C:cytosol"/>
    <property type="evidence" value="ECO:0007669"/>
    <property type="project" value="TreeGrafter"/>
</dbReference>
<dbReference type="GO" id="GO:0003677">
    <property type="term" value="F:DNA binding"/>
    <property type="evidence" value="ECO:0007669"/>
    <property type="project" value="UniProtKB-UniRule"/>
</dbReference>
<dbReference type="Gene3D" id="3.30.1310.10">
    <property type="entry name" value="Nucleoid-associated protein YbaB-like domain"/>
    <property type="match status" value="1"/>
</dbReference>
<dbReference type="HAMAP" id="MF_00274">
    <property type="entry name" value="DNA_YbaB_EbfC"/>
    <property type="match status" value="1"/>
</dbReference>
<dbReference type="InterPro" id="IPR036894">
    <property type="entry name" value="YbaB-like_sf"/>
</dbReference>
<dbReference type="InterPro" id="IPR004401">
    <property type="entry name" value="YbaB/EbfC"/>
</dbReference>
<dbReference type="NCBIfam" id="TIGR00103">
    <property type="entry name" value="DNA_YbaB_EbfC"/>
    <property type="match status" value="1"/>
</dbReference>
<dbReference type="PANTHER" id="PTHR33449">
    <property type="entry name" value="NUCLEOID-ASSOCIATED PROTEIN YBAB"/>
    <property type="match status" value="1"/>
</dbReference>
<dbReference type="PANTHER" id="PTHR33449:SF1">
    <property type="entry name" value="NUCLEOID-ASSOCIATED PROTEIN YBAB"/>
    <property type="match status" value="1"/>
</dbReference>
<dbReference type="Pfam" id="PF02575">
    <property type="entry name" value="YbaB_DNA_bd"/>
    <property type="match status" value="1"/>
</dbReference>
<dbReference type="PIRSF" id="PIRSF004555">
    <property type="entry name" value="UCP004555"/>
    <property type="match status" value="1"/>
</dbReference>
<dbReference type="SUPFAM" id="SSF82607">
    <property type="entry name" value="YbaB-like"/>
    <property type="match status" value="1"/>
</dbReference>
<proteinExistence type="inferred from homology"/>
<evidence type="ECO:0000255" key="1">
    <source>
        <dbReference type="HAMAP-Rule" id="MF_00274"/>
    </source>
</evidence>
<evidence type="ECO:0000256" key="2">
    <source>
        <dbReference type="SAM" id="MobiDB-lite"/>
    </source>
</evidence>
<feature type="chain" id="PRO_1000197667" description="Nucleoid-associated protein JTY_3778">
    <location>
        <begin position="1"/>
        <end position="133"/>
    </location>
</feature>
<feature type="region of interest" description="Disordered" evidence="2">
    <location>
        <begin position="98"/>
        <end position="133"/>
    </location>
</feature>
<feature type="compositionally biased region" description="Pro residues" evidence="2">
    <location>
        <begin position="102"/>
        <end position="113"/>
    </location>
</feature>
<keyword id="KW-0963">Cytoplasm</keyword>
<keyword id="KW-0238">DNA-binding</keyword>
<name>Y3778_MYCBT</name>
<accession>C1AIH0</accession>
<gene>
    <name type="ordered locus">JTY_3778</name>
</gene>
<sequence>MQPGGDMSALLAQAQQMQQKLLEAQQQLANSEVHGQAGGGLVKVVVKGSGEVIGVTIDPKVVDPDDIETLQDLIVGAMRDASQQVTKMAQERLGALAGAMRPPAPPAAPPGAPGMPGMPGMPGAPGAPPVPGI</sequence>
<protein>
    <recommendedName>
        <fullName evidence="1">Nucleoid-associated protein JTY_3778</fullName>
    </recommendedName>
</protein>
<organism>
    <name type="scientific">Mycobacterium bovis (strain BCG / Tokyo 172 / ATCC 35737 / TMC 1019)</name>
    <dbReference type="NCBI Taxonomy" id="561275"/>
    <lineage>
        <taxon>Bacteria</taxon>
        <taxon>Bacillati</taxon>
        <taxon>Actinomycetota</taxon>
        <taxon>Actinomycetes</taxon>
        <taxon>Mycobacteriales</taxon>
        <taxon>Mycobacteriaceae</taxon>
        <taxon>Mycobacterium</taxon>
        <taxon>Mycobacterium tuberculosis complex</taxon>
    </lineage>
</organism>
<reference key="1">
    <citation type="journal article" date="2009" name="Vaccine">
        <title>Whole genome sequence analysis of Mycobacterium bovis bacillus Calmette-Guerin (BCG) Tokyo 172: a comparative study of BCG vaccine substrains.</title>
        <authorList>
            <person name="Seki M."/>
            <person name="Honda I."/>
            <person name="Fujita I."/>
            <person name="Yano I."/>
            <person name="Yamamoto S."/>
            <person name="Koyama A."/>
        </authorList>
    </citation>
    <scope>NUCLEOTIDE SEQUENCE [LARGE SCALE GENOMIC DNA]</scope>
    <source>
        <strain>BCG / Tokyo 172 / ATCC 35737 / TMC 1019</strain>
    </source>
</reference>